<accession>Q6BNP6</accession>
<reference key="1">
    <citation type="journal article" date="2004" name="Nature">
        <title>Genome evolution in yeasts.</title>
        <authorList>
            <person name="Dujon B."/>
            <person name="Sherman D."/>
            <person name="Fischer G."/>
            <person name="Durrens P."/>
            <person name="Casaregola S."/>
            <person name="Lafontaine I."/>
            <person name="de Montigny J."/>
            <person name="Marck C."/>
            <person name="Neuveglise C."/>
            <person name="Talla E."/>
            <person name="Goffard N."/>
            <person name="Frangeul L."/>
            <person name="Aigle M."/>
            <person name="Anthouard V."/>
            <person name="Babour A."/>
            <person name="Barbe V."/>
            <person name="Barnay S."/>
            <person name="Blanchin S."/>
            <person name="Beckerich J.-M."/>
            <person name="Beyne E."/>
            <person name="Bleykasten C."/>
            <person name="Boisrame A."/>
            <person name="Boyer J."/>
            <person name="Cattolico L."/>
            <person name="Confanioleri F."/>
            <person name="de Daruvar A."/>
            <person name="Despons L."/>
            <person name="Fabre E."/>
            <person name="Fairhead C."/>
            <person name="Ferry-Dumazet H."/>
            <person name="Groppi A."/>
            <person name="Hantraye F."/>
            <person name="Hennequin C."/>
            <person name="Jauniaux N."/>
            <person name="Joyet P."/>
            <person name="Kachouri R."/>
            <person name="Kerrest A."/>
            <person name="Koszul R."/>
            <person name="Lemaire M."/>
            <person name="Lesur I."/>
            <person name="Ma L."/>
            <person name="Muller H."/>
            <person name="Nicaud J.-M."/>
            <person name="Nikolski M."/>
            <person name="Oztas S."/>
            <person name="Ozier-Kalogeropoulos O."/>
            <person name="Pellenz S."/>
            <person name="Potier S."/>
            <person name="Richard G.-F."/>
            <person name="Straub M.-L."/>
            <person name="Suleau A."/>
            <person name="Swennen D."/>
            <person name="Tekaia F."/>
            <person name="Wesolowski-Louvel M."/>
            <person name="Westhof E."/>
            <person name="Wirth B."/>
            <person name="Zeniou-Meyer M."/>
            <person name="Zivanovic Y."/>
            <person name="Bolotin-Fukuhara M."/>
            <person name="Thierry A."/>
            <person name="Bouchier C."/>
            <person name="Caudron B."/>
            <person name="Scarpelli C."/>
            <person name="Gaillardin C."/>
            <person name="Weissenbach J."/>
            <person name="Wincker P."/>
            <person name="Souciet J.-L."/>
        </authorList>
    </citation>
    <scope>NUCLEOTIDE SEQUENCE [LARGE SCALE GENOMIC DNA]</scope>
    <source>
        <strain>ATCC 36239 / CBS 767 / BCRC 21394 / JCM 1990 / NBRC 0083 / IGC 2968</strain>
    </source>
</reference>
<name>HSE1_DEBHA</name>
<keyword id="KW-0967">Endosome</keyword>
<keyword id="KW-0472">Membrane</keyword>
<keyword id="KW-0653">Protein transport</keyword>
<keyword id="KW-1185">Reference proteome</keyword>
<keyword id="KW-0728">SH3 domain</keyword>
<keyword id="KW-0813">Transport</keyword>
<gene>
    <name type="primary">HSE1</name>
    <name type="ordered locus">DEHA2E19976g</name>
</gene>
<comment type="function">
    <text evidence="1">Component of the ESCRT-0 complex which is the sorting receptor for ubiquitinated cargo proteins at the multivesicular body (MVB).</text>
</comment>
<comment type="subunit">
    <text evidence="1">Component of the ESCRT-0 complex composed of HSE1 and VPS27.</text>
</comment>
<comment type="subcellular location">
    <subcellularLocation>
        <location evidence="1">Endosome membrane</location>
        <topology evidence="1">Peripheral membrane protein</topology>
        <orientation evidence="1">Cytoplasmic side</orientation>
    </subcellularLocation>
</comment>
<comment type="similarity">
    <text evidence="6">Belongs to the STAM family.</text>
</comment>
<feature type="chain" id="PRO_0000292495" description="Class E vacuolar protein-sorting machinery protein HSE1">
    <location>
        <begin position="1"/>
        <end position="512"/>
    </location>
</feature>
<feature type="domain" description="VHS" evidence="4">
    <location>
        <begin position="22"/>
        <end position="153"/>
    </location>
</feature>
<feature type="domain" description="UIM" evidence="3">
    <location>
        <begin position="175"/>
        <end position="194"/>
    </location>
</feature>
<feature type="domain" description="SH3" evidence="2">
    <location>
        <begin position="255"/>
        <end position="315"/>
    </location>
</feature>
<feature type="region of interest" description="Disordered" evidence="5">
    <location>
        <begin position="153"/>
        <end position="180"/>
    </location>
</feature>
<feature type="region of interest" description="Disordered" evidence="5">
    <location>
        <begin position="200"/>
        <end position="253"/>
    </location>
</feature>
<feature type="region of interest" description="Disordered" evidence="5">
    <location>
        <begin position="411"/>
        <end position="512"/>
    </location>
</feature>
<feature type="compositionally biased region" description="Basic and acidic residues" evidence="5">
    <location>
        <begin position="164"/>
        <end position="180"/>
    </location>
</feature>
<feature type="compositionally biased region" description="Low complexity" evidence="5">
    <location>
        <begin position="215"/>
        <end position="233"/>
    </location>
</feature>
<feature type="compositionally biased region" description="Polar residues" evidence="5">
    <location>
        <begin position="234"/>
        <end position="253"/>
    </location>
</feature>
<feature type="compositionally biased region" description="Polar residues" evidence="5">
    <location>
        <begin position="429"/>
        <end position="476"/>
    </location>
</feature>
<feature type="compositionally biased region" description="Low complexity" evidence="5">
    <location>
        <begin position="502"/>
        <end position="512"/>
    </location>
</feature>
<evidence type="ECO:0000250" key="1"/>
<evidence type="ECO:0000255" key="2">
    <source>
        <dbReference type="PROSITE-ProRule" id="PRU00192"/>
    </source>
</evidence>
<evidence type="ECO:0000255" key="3">
    <source>
        <dbReference type="PROSITE-ProRule" id="PRU00213"/>
    </source>
</evidence>
<evidence type="ECO:0000255" key="4">
    <source>
        <dbReference type="PROSITE-ProRule" id="PRU00218"/>
    </source>
</evidence>
<evidence type="ECO:0000256" key="5">
    <source>
        <dbReference type="SAM" id="MobiDB-lite"/>
    </source>
</evidence>
<evidence type="ECO:0000305" key="6"/>
<sequence>MFGGRQSNNKSNDSLEQLINRATDETLTNDNWQYILDVCDNISSNPEEGTKQGIKVVSSRLASKDANIILRTLSLLVAMAENCGSRMRQEIATTSFVQESLLKKFTDRRLHKTVKFRVAEVIKQLHDSFKTDPSLKPMTDAYNRLVNDYSQYSAETADGPAKPAKKERSRQDKKKEEDELQRVLKLSLQEYEREQTVKKSYLNNKPLPQAQNESQYQEQPRQQQQQQQVLQNQPMHSTPTGQQSTQSPAESQTIATVSKVRALYDLISYEPDELSFRKGDIITVIESVYRDWWRGSLVNGKTGIFPLNYVTPVVTKTPQELSRELDEENRLLAVDSKRIDKLLALLSSNPETINEDEITRLYGDIIPLRTSLGKFIDKYNVRKEELSVLNSQLNNEVKLYNDLMDSSISQRVTHQPSGMSMAPYPTGVASPTHSSFSQANPSMLHQQPTSSGFGNARGNSSNEYFHSQQVPPTSFNQQSQPHSQPQPPQQSGPQRHNTEFSNINNFPNVNNI</sequence>
<organism>
    <name type="scientific">Debaryomyces hansenii (strain ATCC 36239 / CBS 767 / BCRC 21394 / JCM 1990 / NBRC 0083 / IGC 2968)</name>
    <name type="common">Yeast</name>
    <name type="synonym">Torulaspora hansenii</name>
    <dbReference type="NCBI Taxonomy" id="284592"/>
    <lineage>
        <taxon>Eukaryota</taxon>
        <taxon>Fungi</taxon>
        <taxon>Dikarya</taxon>
        <taxon>Ascomycota</taxon>
        <taxon>Saccharomycotina</taxon>
        <taxon>Pichiomycetes</taxon>
        <taxon>Debaryomycetaceae</taxon>
        <taxon>Debaryomyces</taxon>
    </lineage>
</organism>
<dbReference type="EMBL" id="CR382137">
    <property type="protein sequence ID" value="CAG88447.2"/>
    <property type="molecule type" value="Genomic_DNA"/>
</dbReference>
<dbReference type="RefSeq" id="XP_460174.2">
    <property type="nucleotide sequence ID" value="XM_460174.1"/>
</dbReference>
<dbReference type="SMR" id="Q6BNP6"/>
<dbReference type="FunCoup" id="Q6BNP6">
    <property type="interactions" value="376"/>
</dbReference>
<dbReference type="STRING" id="284592.Q6BNP6"/>
<dbReference type="GeneID" id="2901988"/>
<dbReference type="KEGG" id="dha:DEHA2E19976g"/>
<dbReference type="eggNOG" id="KOG2199">
    <property type="taxonomic scope" value="Eukaryota"/>
</dbReference>
<dbReference type="HOGENOM" id="CLU_010104_2_0_1"/>
<dbReference type="InParanoid" id="Q6BNP6"/>
<dbReference type="OMA" id="QVYRDWW"/>
<dbReference type="OrthoDB" id="10255964at2759"/>
<dbReference type="Proteomes" id="UP000000599">
    <property type="component" value="Chromosome E"/>
</dbReference>
<dbReference type="GO" id="GO:0010008">
    <property type="term" value="C:endosome membrane"/>
    <property type="evidence" value="ECO:0007669"/>
    <property type="project" value="UniProtKB-SubCell"/>
</dbReference>
<dbReference type="GO" id="GO:0033565">
    <property type="term" value="C:ESCRT-0 complex"/>
    <property type="evidence" value="ECO:0007669"/>
    <property type="project" value="EnsemblFungi"/>
</dbReference>
<dbReference type="GO" id="GO:0005774">
    <property type="term" value="C:vacuolar membrane"/>
    <property type="evidence" value="ECO:0007669"/>
    <property type="project" value="EnsemblFungi"/>
</dbReference>
<dbReference type="GO" id="GO:0035091">
    <property type="term" value="F:phosphatidylinositol binding"/>
    <property type="evidence" value="ECO:0007669"/>
    <property type="project" value="InterPro"/>
</dbReference>
<dbReference type="GO" id="GO:0019904">
    <property type="term" value="F:protein domain specific binding"/>
    <property type="evidence" value="ECO:0007669"/>
    <property type="project" value="EnsemblFungi"/>
</dbReference>
<dbReference type="GO" id="GO:0046982">
    <property type="term" value="F:protein heterodimerization activity"/>
    <property type="evidence" value="ECO:0007669"/>
    <property type="project" value="EnsemblFungi"/>
</dbReference>
<dbReference type="GO" id="GO:0043130">
    <property type="term" value="F:ubiquitin binding"/>
    <property type="evidence" value="ECO:0007669"/>
    <property type="project" value="EnsemblFungi"/>
</dbReference>
<dbReference type="GO" id="GO:1904669">
    <property type="term" value="P:ATP export"/>
    <property type="evidence" value="ECO:0007669"/>
    <property type="project" value="EnsemblFungi"/>
</dbReference>
<dbReference type="GO" id="GO:0016237">
    <property type="term" value="P:microautophagy"/>
    <property type="evidence" value="ECO:0007669"/>
    <property type="project" value="EnsemblFungi"/>
</dbReference>
<dbReference type="GO" id="GO:1903319">
    <property type="term" value="P:positive regulation of protein maturation"/>
    <property type="evidence" value="ECO:0007669"/>
    <property type="project" value="EnsemblFungi"/>
</dbReference>
<dbReference type="GO" id="GO:0009306">
    <property type="term" value="P:protein secretion"/>
    <property type="evidence" value="ECO:0007669"/>
    <property type="project" value="EnsemblFungi"/>
</dbReference>
<dbReference type="GO" id="GO:0006623">
    <property type="term" value="P:protein targeting to vacuole"/>
    <property type="evidence" value="ECO:0007669"/>
    <property type="project" value="EnsemblFungi"/>
</dbReference>
<dbReference type="GO" id="GO:0043328">
    <property type="term" value="P:protein transport to vacuole involved in ubiquitin-dependent protein catabolic process via the multivesicular body sorting pathway"/>
    <property type="evidence" value="ECO:0007669"/>
    <property type="project" value="TreeGrafter"/>
</dbReference>
<dbReference type="CDD" id="cd21386">
    <property type="entry name" value="GAT_Hse1"/>
    <property type="match status" value="1"/>
</dbReference>
<dbReference type="CDD" id="cd11805">
    <property type="entry name" value="SH3_GRB2_like_C"/>
    <property type="match status" value="1"/>
</dbReference>
<dbReference type="CDD" id="cd16978">
    <property type="entry name" value="VHS_HSE1"/>
    <property type="match status" value="1"/>
</dbReference>
<dbReference type="FunFam" id="2.30.30.40:FF:000072">
    <property type="entry name" value="Unconventional Myosin IB"/>
    <property type="match status" value="1"/>
</dbReference>
<dbReference type="Gene3D" id="1.20.5.1940">
    <property type="match status" value="1"/>
</dbReference>
<dbReference type="Gene3D" id="1.25.40.90">
    <property type="match status" value="1"/>
</dbReference>
<dbReference type="Gene3D" id="2.30.30.40">
    <property type="entry name" value="SH3 Domains"/>
    <property type="match status" value="1"/>
</dbReference>
<dbReference type="InterPro" id="IPR008942">
    <property type="entry name" value="ENTH_VHS"/>
</dbReference>
<dbReference type="InterPro" id="IPR004152">
    <property type="entry name" value="GAT_dom"/>
</dbReference>
<dbReference type="InterPro" id="IPR036028">
    <property type="entry name" value="SH3-like_dom_sf"/>
</dbReference>
<dbReference type="InterPro" id="IPR001452">
    <property type="entry name" value="SH3_domain"/>
</dbReference>
<dbReference type="InterPro" id="IPR050670">
    <property type="entry name" value="STAM"/>
</dbReference>
<dbReference type="InterPro" id="IPR003903">
    <property type="entry name" value="UIM_dom"/>
</dbReference>
<dbReference type="InterPro" id="IPR002014">
    <property type="entry name" value="VHS_dom"/>
</dbReference>
<dbReference type="PANTHER" id="PTHR45929">
    <property type="entry name" value="JAK PATHWAY SIGNAL TRANSDUCTION ADAPTOR MOLECULE"/>
    <property type="match status" value="1"/>
</dbReference>
<dbReference type="PANTHER" id="PTHR45929:SF3">
    <property type="entry name" value="JAK PATHWAY SIGNAL TRANSDUCTION ADAPTOR MOLECULE"/>
    <property type="match status" value="1"/>
</dbReference>
<dbReference type="Pfam" id="PF03127">
    <property type="entry name" value="GAT"/>
    <property type="match status" value="1"/>
</dbReference>
<dbReference type="Pfam" id="PF00018">
    <property type="entry name" value="SH3_1"/>
    <property type="match status" value="1"/>
</dbReference>
<dbReference type="Pfam" id="PF00790">
    <property type="entry name" value="VHS"/>
    <property type="match status" value="1"/>
</dbReference>
<dbReference type="PRINTS" id="PR00452">
    <property type="entry name" value="SH3DOMAIN"/>
</dbReference>
<dbReference type="SMART" id="SM00326">
    <property type="entry name" value="SH3"/>
    <property type="match status" value="1"/>
</dbReference>
<dbReference type="SMART" id="SM00288">
    <property type="entry name" value="VHS"/>
    <property type="match status" value="1"/>
</dbReference>
<dbReference type="SUPFAM" id="SSF48464">
    <property type="entry name" value="ENTH/VHS domain"/>
    <property type="match status" value="1"/>
</dbReference>
<dbReference type="SUPFAM" id="SSF50044">
    <property type="entry name" value="SH3-domain"/>
    <property type="match status" value="1"/>
</dbReference>
<dbReference type="PROSITE" id="PS50002">
    <property type="entry name" value="SH3"/>
    <property type="match status" value="1"/>
</dbReference>
<dbReference type="PROSITE" id="PS50330">
    <property type="entry name" value="UIM"/>
    <property type="match status" value="1"/>
</dbReference>
<dbReference type="PROSITE" id="PS50179">
    <property type="entry name" value="VHS"/>
    <property type="match status" value="1"/>
</dbReference>
<proteinExistence type="inferred from homology"/>
<protein>
    <recommendedName>
        <fullName>Class E vacuolar protein-sorting machinery protein HSE1</fullName>
    </recommendedName>
</protein>